<sequence length="402" mass="41560">MSNEELTERWQGTLMNNYGTPRLPLVRGEGARLWDADGKEYLDFVGGIAVNALGHAHPAVVDAVSRQIASLGHVSNLFIAEPPVALAERLLQHFGRDGKVYFCNSGAEANEGAFKIGRLTGRPHMVATRGGFHGRTMGALALTGQPGKQEPFLPLPGDVTHVPYGDPQALAAAVTEETALVIIEPIQGENGVVVPPPGYLKAARAITAATGALLVLDEVQTGVGRTGHWFEYQAHEGVLPDVVTLAKGLGGGLPLGATVAFGRAADLLQPGHHGTTFGGNPVACAAGLAVLDTIADEGLLDNVKRQSETLRGGVEALGHPLVAHVRGAGLLLGIVLTEPLAAQVQQAAQDAGILVNAPAPDVVRLMPALNLGDDVVEAFLGALPGILDQAAETAHGDGRSGE</sequence>
<comment type="catalytic activity">
    <reaction evidence="1">
        <text>N(2)-acetyl-L-ornithine + 2-oxoglutarate = N-acetyl-L-glutamate 5-semialdehyde + L-glutamate</text>
        <dbReference type="Rhea" id="RHEA:18049"/>
        <dbReference type="ChEBI" id="CHEBI:16810"/>
        <dbReference type="ChEBI" id="CHEBI:29123"/>
        <dbReference type="ChEBI" id="CHEBI:29985"/>
        <dbReference type="ChEBI" id="CHEBI:57805"/>
        <dbReference type="EC" id="2.6.1.11"/>
    </reaction>
</comment>
<comment type="cofactor">
    <cofactor evidence="1">
        <name>pyridoxal 5'-phosphate</name>
        <dbReference type="ChEBI" id="CHEBI:597326"/>
    </cofactor>
    <text evidence="1">Binds 1 pyridoxal phosphate per subunit.</text>
</comment>
<comment type="pathway">
    <text evidence="1">Amino-acid biosynthesis; L-arginine biosynthesis; N(2)-acetyl-L-ornithine from L-glutamate: step 4/4.</text>
</comment>
<comment type="subunit">
    <text evidence="1">Homodimer.</text>
</comment>
<comment type="subcellular location">
    <subcellularLocation>
        <location evidence="1">Cytoplasm</location>
    </subcellularLocation>
</comment>
<comment type="miscellaneous">
    <text evidence="1">May also have succinyldiaminopimelate aminotransferase activity, thus carrying out the corresponding step in lysine biosynthesis.</text>
</comment>
<comment type="similarity">
    <text evidence="1">Belongs to the class-III pyridoxal-phosphate-dependent aminotransferase family. ArgD subfamily.</text>
</comment>
<protein>
    <recommendedName>
        <fullName evidence="1">Acetylornithine aminotransferase</fullName>
        <shortName evidence="1">ACOAT</shortName>
        <ecNumber evidence="1">2.6.1.11</ecNumber>
    </recommendedName>
</protein>
<proteinExistence type="inferred from homology"/>
<gene>
    <name evidence="1" type="primary">argD</name>
    <name type="ordered locus">SCO1577</name>
    <name type="ORF">SCL24.13c</name>
</gene>
<reference key="1">
    <citation type="journal article" date="2002" name="Nature">
        <title>Complete genome sequence of the model actinomycete Streptomyces coelicolor A3(2).</title>
        <authorList>
            <person name="Bentley S.D."/>
            <person name="Chater K.F."/>
            <person name="Cerdeno-Tarraga A.-M."/>
            <person name="Challis G.L."/>
            <person name="Thomson N.R."/>
            <person name="James K.D."/>
            <person name="Harris D.E."/>
            <person name="Quail M.A."/>
            <person name="Kieser H."/>
            <person name="Harper D."/>
            <person name="Bateman A."/>
            <person name="Brown S."/>
            <person name="Chandra G."/>
            <person name="Chen C.W."/>
            <person name="Collins M."/>
            <person name="Cronin A."/>
            <person name="Fraser A."/>
            <person name="Goble A."/>
            <person name="Hidalgo J."/>
            <person name="Hornsby T."/>
            <person name="Howarth S."/>
            <person name="Huang C.-H."/>
            <person name="Kieser T."/>
            <person name="Larke L."/>
            <person name="Murphy L.D."/>
            <person name="Oliver K."/>
            <person name="O'Neil S."/>
            <person name="Rabbinowitsch E."/>
            <person name="Rajandream M.A."/>
            <person name="Rutherford K.M."/>
            <person name="Rutter S."/>
            <person name="Seeger K."/>
            <person name="Saunders D."/>
            <person name="Sharp S."/>
            <person name="Squares R."/>
            <person name="Squares S."/>
            <person name="Taylor K."/>
            <person name="Warren T."/>
            <person name="Wietzorrek A."/>
            <person name="Woodward J.R."/>
            <person name="Barrell B.G."/>
            <person name="Parkhill J."/>
            <person name="Hopwood D.A."/>
        </authorList>
    </citation>
    <scope>NUCLEOTIDE SEQUENCE [LARGE SCALE GENOMIC DNA]</scope>
    <source>
        <strain>ATCC BAA-471 / A3(2) / M145</strain>
    </source>
</reference>
<name>ARGD_STRCO</name>
<dbReference type="EC" id="2.6.1.11" evidence="1"/>
<dbReference type="EMBL" id="AL939109">
    <property type="protein sequence ID" value="CAB76097.1"/>
    <property type="molecule type" value="Genomic_DNA"/>
</dbReference>
<dbReference type="RefSeq" id="NP_625854.1">
    <property type="nucleotide sequence ID" value="NC_003888.3"/>
</dbReference>
<dbReference type="RefSeq" id="WP_003977247.1">
    <property type="nucleotide sequence ID" value="NZ_VNID01000021.1"/>
</dbReference>
<dbReference type="SMR" id="Q9L1A4"/>
<dbReference type="FunCoup" id="Q9L1A4">
    <property type="interactions" value="513"/>
</dbReference>
<dbReference type="STRING" id="100226.gene:17759170"/>
<dbReference type="PaxDb" id="100226-SCO1577"/>
<dbReference type="KEGG" id="sco:SCO1577"/>
<dbReference type="PATRIC" id="fig|100226.15.peg.1589"/>
<dbReference type="eggNOG" id="COG4992">
    <property type="taxonomic scope" value="Bacteria"/>
</dbReference>
<dbReference type="HOGENOM" id="CLU_016922_10_1_11"/>
<dbReference type="InParanoid" id="Q9L1A4"/>
<dbReference type="OrthoDB" id="9801052at2"/>
<dbReference type="PhylomeDB" id="Q9L1A4"/>
<dbReference type="UniPathway" id="UPA00068">
    <property type="reaction ID" value="UER00109"/>
</dbReference>
<dbReference type="Proteomes" id="UP000001973">
    <property type="component" value="Chromosome"/>
</dbReference>
<dbReference type="GO" id="GO:0005737">
    <property type="term" value="C:cytoplasm"/>
    <property type="evidence" value="ECO:0007669"/>
    <property type="project" value="UniProtKB-SubCell"/>
</dbReference>
<dbReference type="GO" id="GO:0042802">
    <property type="term" value="F:identical protein binding"/>
    <property type="evidence" value="ECO:0000318"/>
    <property type="project" value="GO_Central"/>
</dbReference>
<dbReference type="GO" id="GO:0003992">
    <property type="term" value="F:N2-acetyl-L-ornithine:2-oxoglutarate 5-aminotransferase activity"/>
    <property type="evidence" value="ECO:0007669"/>
    <property type="project" value="UniProtKB-UniRule"/>
</dbReference>
<dbReference type="GO" id="GO:0030170">
    <property type="term" value="F:pyridoxal phosphate binding"/>
    <property type="evidence" value="ECO:0000318"/>
    <property type="project" value="GO_Central"/>
</dbReference>
<dbReference type="GO" id="GO:0006526">
    <property type="term" value="P:L-arginine biosynthetic process"/>
    <property type="evidence" value="ECO:0007669"/>
    <property type="project" value="UniProtKB-UniRule"/>
</dbReference>
<dbReference type="CDD" id="cd00610">
    <property type="entry name" value="OAT_like"/>
    <property type="match status" value="1"/>
</dbReference>
<dbReference type="FunFam" id="3.40.640.10:FF:000004">
    <property type="entry name" value="Acetylornithine aminotransferase"/>
    <property type="match status" value="1"/>
</dbReference>
<dbReference type="Gene3D" id="3.90.1150.10">
    <property type="entry name" value="Aspartate Aminotransferase, domain 1"/>
    <property type="match status" value="1"/>
</dbReference>
<dbReference type="Gene3D" id="3.40.640.10">
    <property type="entry name" value="Type I PLP-dependent aspartate aminotransferase-like (Major domain)"/>
    <property type="match status" value="1"/>
</dbReference>
<dbReference type="HAMAP" id="MF_01107">
    <property type="entry name" value="ArgD_aminotrans_3"/>
    <property type="match status" value="1"/>
</dbReference>
<dbReference type="InterPro" id="IPR004636">
    <property type="entry name" value="AcOrn/SuccOrn_fam"/>
</dbReference>
<dbReference type="InterPro" id="IPR005814">
    <property type="entry name" value="Aminotrans_3"/>
</dbReference>
<dbReference type="InterPro" id="IPR049704">
    <property type="entry name" value="Aminotrans_3_PPA_site"/>
</dbReference>
<dbReference type="InterPro" id="IPR050103">
    <property type="entry name" value="Class-III_PLP-dep_AT"/>
</dbReference>
<dbReference type="InterPro" id="IPR015424">
    <property type="entry name" value="PyrdxlP-dep_Trfase"/>
</dbReference>
<dbReference type="InterPro" id="IPR015421">
    <property type="entry name" value="PyrdxlP-dep_Trfase_major"/>
</dbReference>
<dbReference type="InterPro" id="IPR015422">
    <property type="entry name" value="PyrdxlP-dep_Trfase_small"/>
</dbReference>
<dbReference type="NCBIfam" id="TIGR00707">
    <property type="entry name" value="argD"/>
    <property type="match status" value="1"/>
</dbReference>
<dbReference type="NCBIfam" id="NF002325">
    <property type="entry name" value="PRK01278.1"/>
    <property type="match status" value="1"/>
</dbReference>
<dbReference type="NCBIfam" id="NF002874">
    <property type="entry name" value="PRK03244.1"/>
    <property type="match status" value="1"/>
</dbReference>
<dbReference type="PANTHER" id="PTHR11986:SF79">
    <property type="entry name" value="ACETYLORNITHINE AMINOTRANSFERASE, MITOCHONDRIAL"/>
    <property type="match status" value="1"/>
</dbReference>
<dbReference type="PANTHER" id="PTHR11986">
    <property type="entry name" value="AMINOTRANSFERASE CLASS III"/>
    <property type="match status" value="1"/>
</dbReference>
<dbReference type="Pfam" id="PF00202">
    <property type="entry name" value="Aminotran_3"/>
    <property type="match status" value="1"/>
</dbReference>
<dbReference type="PIRSF" id="PIRSF000521">
    <property type="entry name" value="Transaminase_4ab_Lys_Orn"/>
    <property type="match status" value="1"/>
</dbReference>
<dbReference type="SUPFAM" id="SSF53383">
    <property type="entry name" value="PLP-dependent transferases"/>
    <property type="match status" value="1"/>
</dbReference>
<dbReference type="PROSITE" id="PS00600">
    <property type="entry name" value="AA_TRANSFER_CLASS_3"/>
    <property type="match status" value="1"/>
</dbReference>
<organism>
    <name type="scientific">Streptomyces coelicolor (strain ATCC BAA-471 / A3(2) / M145)</name>
    <dbReference type="NCBI Taxonomy" id="100226"/>
    <lineage>
        <taxon>Bacteria</taxon>
        <taxon>Bacillati</taxon>
        <taxon>Actinomycetota</taxon>
        <taxon>Actinomycetes</taxon>
        <taxon>Kitasatosporales</taxon>
        <taxon>Streptomycetaceae</taxon>
        <taxon>Streptomyces</taxon>
        <taxon>Streptomyces albidoflavus group</taxon>
    </lineage>
</organism>
<evidence type="ECO:0000255" key="1">
    <source>
        <dbReference type="HAMAP-Rule" id="MF_01107"/>
    </source>
</evidence>
<feature type="chain" id="PRO_0000112800" description="Acetylornithine aminotransferase">
    <location>
        <begin position="1"/>
        <end position="402"/>
    </location>
</feature>
<feature type="binding site" evidence="1">
    <location>
        <begin position="106"/>
        <end position="107"/>
    </location>
    <ligand>
        <name>pyridoxal 5'-phosphate</name>
        <dbReference type="ChEBI" id="CHEBI:597326"/>
    </ligand>
</feature>
<feature type="binding site" evidence="1">
    <location>
        <position position="132"/>
    </location>
    <ligand>
        <name>pyridoxal 5'-phosphate</name>
        <dbReference type="ChEBI" id="CHEBI:597326"/>
    </ligand>
</feature>
<feature type="binding site" evidence="1">
    <location>
        <position position="135"/>
    </location>
    <ligand>
        <name>N(2)-acetyl-L-ornithine</name>
        <dbReference type="ChEBI" id="CHEBI:57805"/>
    </ligand>
</feature>
<feature type="binding site" evidence="1">
    <location>
        <begin position="217"/>
        <end position="220"/>
    </location>
    <ligand>
        <name>pyridoxal 5'-phosphate</name>
        <dbReference type="ChEBI" id="CHEBI:597326"/>
    </ligand>
</feature>
<feature type="binding site" evidence="1">
    <location>
        <position position="275"/>
    </location>
    <ligand>
        <name>N(2)-acetyl-L-ornithine</name>
        <dbReference type="ChEBI" id="CHEBI:57805"/>
    </ligand>
</feature>
<feature type="binding site" evidence="1">
    <location>
        <position position="276"/>
    </location>
    <ligand>
        <name>pyridoxal 5'-phosphate</name>
        <dbReference type="ChEBI" id="CHEBI:597326"/>
    </ligand>
</feature>
<feature type="modified residue" description="N6-(pyridoxal phosphate)lysine" evidence="1">
    <location>
        <position position="247"/>
    </location>
</feature>
<keyword id="KW-0028">Amino-acid biosynthesis</keyword>
<keyword id="KW-0032">Aminotransferase</keyword>
<keyword id="KW-0055">Arginine biosynthesis</keyword>
<keyword id="KW-0963">Cytoplasm</keyword>
<keyword id="KW-0663">Pyridoxal phosphate</keyword>
<keyword id="KW-1185">Reference proteome</keyword>
<keyword id="KW-0808">Transferase</keyword>
<accession>Q9L1A4</accession>